<keyword id="KW-0687">Ribonucleoprotein</keyword>
<keyword id="KW-0689">Ribosomal protein</keyword>
<keyword id="KW-0694">RNA-binding</keyword>
<keyword id="KW-0699">rRNA-binding</keyword>
<protein>
    <recommendedName>
        <fullName evidence="1">Large ribosomal subunit protein uL14</fullName>
    </recommendedName>
    <alternativeName>
        <fullName evidence="2">50S ribosomal protein L14</fullName>
    </alternativeName>
</protein>
<proteinExistence type="inferred from homology"/>
<dbReference type="EMBL" id="CP000687">
    <property type="protein sequence ID" value="ABY70355.1"/>
    <property type="molecule type" value="Genomic_DNA"/>
</dbReference>
<dbReference type="RefSeq" id="WP_005619403.1">
    <property type="nucleotide sequence ID" value="NC_010278.1"/>
</dbReference>
<dbReference type="SMR" id="B0BSU1"/>
<dbReference type="GeneID" id="93298799"/>
<dbReference type="KEGG" id="apj:APJL_1805"/>
<dbReference type="HOGENOM" id="CLU_095071_2_1_6"/>
<dbReference type="Proteomes" id="UP000008547">
    <property type="component" value="Chromosome"/>
</dbReference>
<dbReference type="GO" id="GO:0022625">
    <property type="term" value="C:cytosolic large ribosomal subunit"/>
    <property type="evidence" value="ECO:0007669"/>
    <property type="project" value="TreeGrafter"/>
</dbReference>
<dbReference type="GO" id="GO:0070180">
    <property type="term" value="F:large ribosomal subunit rRNA binding"/>
    <property type="evidence" value="ECO:0007669"/>
    <property type="project" value="TreeGrafter"/>
</dbReference>
<dbReference type="GO" id="GO:0003735">
    <property type="term" value="F:structural constituent of ribosome"/>
    <property type="evidence" value="ECO:0007669"/>
    <property type="project" value="InterPro"/>
</dbReference>
<dbReference type="GO" id="GO:0006412">
    <property type="term" value="P:translation"/>
    <property type="evidence" value="ECO:0007669"/>
    <property type="project" value="UniProtKB-UniRule"/>
</dbReference>
<dbReference type="CDD" id="cd00337">
    <property type="entry name" value="Ribosomal_uL14"/>
    <property type="match status" value="1"/>
</dbReference>
<dbReference type="FunFam" id="2.40.150.20:FF:000001">
    <property type="entry name" value="50S ribosomal protein L14"/>
    <property type="match status" value="1"/>
</dbReference>
<dbReference type="Gene3D" id="2.40.150.20">
    <property type="entry name" value="Ribosomal protein L14"/>
    <property type="match status" value="1"/>
</dbReference>
<dbReference type="HAMAP" id="MF_01367">
    <property type="entry name" value="Ribosomal_uL14"/>
    <property type="match status" value="1"/>
</dbReference>
<dbReference type="InterPro" id="IPR000218">
    <property type="entry name" value="Ribosomal_uL14"/>
</dbReference>
<dbReference type="InterPro" id="IPR005745">
    <property type="entry name" value="Ribosomal_uL14_bac-type"/>
</dbReference>
<dbReference type="InterPro" id="IPR019972">
    <property type="entry name" value="Ribosomal_uL14_CS"/>
</dbReference>
<dbReference type="InterPro" id="IPR036853">
    <property type="entry name" value="Ribosomal_uL14_sf"/>
</dbReference>
<dbReference type="NCBIfam" id="TIGR01067">
    <property type="entry name" value="rplN_bact"/>
    <property type="match status" value="1"/>
</dbReference>
<dbReference type="PANTHER" id="PTHR11761">
    <property type="entry name" value="50S/60S RIBOSOMAL PROTEIN L14/L23"/>
    <property type="match status" value="1"/>
</dbReference>
<dbReference type="PANTHER" id="PTHR11761:SF3">
    <property type="entry name" value="LARGE RIBOSOMAL SUBUNIT PROTEIN UL14M"/>
    <property type="match status" value="1"/>
</dbReference>
<dbReference type="Pfam" id="PF00238">
    <property type="entry name" value="Ribosomal_L14"/>
    <property type="match status" value="1"/>
</dbReference>
<dbReference type="SMART" id="SM01374">
    <property type="entry name" value="Ribosomal_L14"/>
    <property type="match status" value="1"/>
</dbReference>
<dbReference type="SUPFAM" id="SSF50193">
    <property type="entry name" value="Ribosomal protein L14"/>
    <property type="match status" value="1"/>
</dbReference>
<dbReference type="PROSITE" id="PS00049">
    <property type="entry name" value="RIBOSOMAL_L14"/>
    <property type="match status" value="1"/>
</dbReference>
<accession>B0BSU1</accession>
<feature type="chain" id="PRO_1000144213" description="Large ribosomal subunit protein uL14">
    <location>
        <begin position="1"/>
        <end position="123"/>
    </location>
</feature>
<name>RL14_ACTPJ</name>
<evidence type="ECO:0000255" key="1">
    <source>
        <dbReference type="HAMAP-Rule" id="MF_01367"/>
    </source>
</evidence>
<evidence type="ECO:0000305" key="2"/>
<comment type="function">
    <text evidence="1">Binds to 23S rRNA. Forms part of two intersubunit bridges in the 70S ribosome.</text>
</comment>
<comment type="subunit">
    <text evidence="1">Part of the 50S ribosomal subunit. Forms a cluster with proteins L3 and L19. In the 70S ribosome, L14 and L19 interact and together make contacts with the 16S rRNA in bridges B5 and B8.</text>
</comment>
<comment type="similarity">
    <text evidence="1">Belongs to the universal ribosomal protein uL14 family.</text>
</comment>
<organism>
    <name type="scientific">Actinobacillus pleuropneumoniae serotype 3 (strain JL03)</name>
    <dbReference type="NCBI Taxonomy" id="434271"/>
    <lineage>
        <taxon>Bacteria</taxon>
        <taxon>Pseudomonadati</taxon>
        <taxon>Pseudomonadota</taxon>
        <taxon>Gammaproteobacteria</taxon>
        <taxon>Pasteurellales</taxon>
        <taxon>Pasteurellaceae</taxon>
        <taxon>Actinobacillus</taxon>
    </lineage>
</organism>
<reference key="1">
    <citation type="journal article" date="2008" name="PLoS ONE">
        <title>Genome biology of Actinobacillus pleuropneumoniae JL03, an isolate of serotype 3 prevalent in China.</title>
        <authorList>
            <person name="Xu Z."/>
            <person name="Zhou Y."/>
            <person name="Li L."/>
            <person name="Zhou R."/>
            <person name="Xiao S."/>
            <person name="Wan Y."/>
            <person name="Zhang S."/>
            <person name="Wang K."/>
            <person name="Li W."/>
            <person name="Li L."/>
            <person name="Jin H."/>
            <person name="Kang M."/>
            <person name="Dalai B."/>
            <person name="Li T."/>
            <person name="Liu L."/>
            <person name="Cheng Y."/>
            <person name="Zhang L."/>
            <person name="Xu T."/>
            <person name="Zheng H."/>
            <person name="Pu S."/>
            <person name="Wang B."/>
            <person name="Gu W."/>
            <person name="Zhang X.L."/>
            <person name="Zhu G.-F."/>
            <person name="Wang S."/>
            <person name="Zhao G.-P."/>
            <person name="Chen H."/>
        </authorList>
    </citation>
    <scope>NUCLEOTIDE SEQUENCE [LARGE SCALE GENOMIC DNA]</scope>
    <source>
        <strain>JL03</strain>
    </source>
</reference>
<gene>
    <name evidence="1" type="primary">rplN</name>
    <name type="ordered locus">APJL_1805</name>
</gene>
<sequence length="123" mass="13487">MIQEQTMLDVADNSGARSVMCIKVLGGSHRRYAAIGDIIKVTVKEAIPRGKVKKGDVLKAVVVRTKKGVRRPDGSVIRFDGNACVILNNNTEQPIGTRIFGPVTRELRSEKFMKIISLAPEVL</sequence>